<gene>
    <name type="primary">TBCCD1</name>
</gene>
<dbReference type="EMBL" id="BC134464">
    <property type="protein sequence ID" value="AAI34465.1"/>
    <property type="molecule type" value="mRNA"/>
</dbReference>
<dbReference type="RefSeq" id="NP_001077199.1">
    <property type="nucleotide sequence ID" value="NM_001083730.1"/>
</dbReference>
<dbReference type="SMR" id="A4IF93"/>
<dbReference type="FunCoup" id="A4IF93">
    <property type="interactions" value="2476"/>
</dbReference>
<dbReference type="STRING" id="9913.ENSBTAP00000004087"/>
<dbReference type="PaxDb" id="9913-ENSBTAP00000004087"/>
<dbReference type="GeneID" id="538314"/>
<dbReference type="KEGG" id="bta:538314"/>
<dbReference type="CTD" id="55171"/>
<dbReference type="eggNOG" id="KOG4416">
    <property type="taxonomic scope" value="Eukaryota"/>
</dbReference>
<dbReference type="InParanoid" id="A4IF93"/>
<dbReference type="OrthoDB" id="427777at2759"/>
<dbReference type="Proteomes" id="UP000009136">
    <property type="component" value="Unplaced"/>
</dbReference>
<dbReference type="GO" id="GO:0005737">
    <property type="term" value="C:cytoplasm"/>
    <property type="evidence" value="ECO:0007669"/>
    <property type="project" value="UniProtKB-KW"/>
</dbReference>
<dbReference type="GO" id="GO:0031616">
    <property type="term" value="C:spindle pole centrosome"/>
    <property type="evidence" value="ECO:0000250"/>
    <property type="project" value="UniProtKB"/>
</dbReference>
<dbReference type="GO" id="GO:0051661">
    <property type="term" value="P:maintenance of centrosome location"/>
    <property type="evidence" value="ECO:0000250"/>
    <property type="project" value="UniProtKB"/>
</dbReference>
<dbReference type="GO" id="GO:0051684">
    <property type="term" value="P:maintenance of Golgi location"/>
    <property type="evidence" value="ECO:0000250"/>
    <property type="project" value="UniProtKB"/>
</dbReference>
<dbReference type="GO" id="GO:0030334">
    <property type="term" value="P:regulation of cell migration"/>
    <property type="evidence" value="ECO:0000250"/>
    <property type="project" value="UniProtKB"/>
</dbReference>
<dbReference type="GO" id="GO:0008360">
    <property type="term" value="P:regulation of cell shape"/>
    <property type="evidence" value="ECO:0000250"/>
    <property type="project" value="UniProtKB"/>
</dbReference>
<dbReference type="FunFam" id="2.160.20.70:FF:000005">
    <property type="entry name" value="TBCC domain-containing protein 1"/>
    <property type="match status" value="1"/>
</dbReference>
<dbReference type="Gene3D" id="2.160.20.70">
    <property type="match status" value="1"/>
</dbReference>
<dbReference type="InterPro" id="IPR017901">
    <property type="entry name" value="C-CAP_CF_C-like"/>
</dbReference>
<dbReference type="InterPro" id="IPR016098">
    <property type="entry name" value="CAP/MinC_C"/>
</dbReference>
<dbReference type="InterPro" id="IPR036223">
    <property type="entry name" value="CAP_C_sf"/>
</dbReference>
<dbReference type="InterPro" id="IPR006599">
    <property type="entry name" value="CARP_motif"/>
</dbReference>
<dbReference type="InterPro" id="IPR039589">
    <property type="entry name" value="TBCC1"/>
</dbReference>
<dbReference type="InterPro" id="IPR012945">
    <property type="entry name" value="Tubulin-bd_cofactor_C_dom"/>
</dbReference>
<dbReference type="PANTHER" id="PTHR16052">
    <property type="entry name" value="TBCC DOMAIN-CONTAINING PROTEIN 1"/>
    <property type="match status" value="1"/>
</dbReference>
<dbReference type="PANTHER" id="PTHR16052:SF0">
    <property type="entry name" value="TBCC DOMAIN-CONTAINING PROTEIN 1"/>
    <property type="match status" value="1"/>
</dbReference>
<dbReference type="Pfam" id="PF07986">
    <property type="entry name" value="TBCC"/>
    <property type="match status" value="1"/>
</dbReference>
<dbReference type="SMART" id="SM00673">
    <property type="entry name" value="CARP"/>
    <property type="match status" value="2"/>
</dbReference>
<dbReference type="SUPFAM" id="SSF69340">
    <property type="entry name" value="C-terminal domain of adenylylcyclase associated protein"/>
    <property type="match status" value="1"/>
</dbReference>
<dbReference type="PROSITE" id="PS51329">
    <property type="entry name" value="C_CAP_COFACTOR_C"/>
    <property type="match status" value="1"/>
</dbReference>
<organism>
    <name type="scientific">Bos taurus</name>
    <name type="common">Bovine</name>
    <dbReference type="NCBI Taxonomy" id="9913"/>
    <lineage>
        <taxon>Eukaryota</taxon>
        <taxon>Metazoa</taxon>
        <taxon>Chordata</taxon>
        <taxon>Craniata</taxon>
        <taxon>Vertebrata</taxon>
        <taxon>Euteleostomi</taxon>
        <taxon>Mammalia</taxon>
        <taxon>Eutheria</taxon>
        <taxon>Laurasiatheria</taxon>
        <taxon>Artiodactyla</taxon>
        <taxon>Ruminantia</taxon>
        <taxon>Pecora</taxon>
        <taxon>Bovidae</taxon>
        <taxon>Bovinae</taxon>
        <taxon>Bos</taxon>
    </lineage>
</organism>
<protein>
    <recommendedName>
        <fullName>TBCC domain-containing protein 1</fullName>
    </recommendedName>
</protein>
<comment type="function">
    <text evidence="1">Plays a role in the regulation of centrosome and Golgi apparatus positioning, with consequences on cell shape and cell migration.</text>
</comment>
<comment type="subcellular location">
    <subcellularLocation>
        <location evidence="1">Cytoplasm</location>
        <location evidence="1">Cytoskeleton</location>
        <location evidence="1">Microtubule organizing center</location>
        <location evidence="1">Centrosome</location>
    </subcellularLocation>
    <subcellularLocation>
        <location evidence="1">Cytoplasm</location>
        <location evidence="1">Cytoskeleton</location>
        <location evidence="1">Spindle pole</location>
    </subcellularLocation>
    <text evidence="1">Localizes at the spindle midzone, midbody and basal bodies of primary and motile cilia.</text>
</comment>
<comment type="similarity">
    <text evidence="3">Belongs to the TBCC family.</text>
</comment>
<reference key="1">
    <citation type="submission" date="2007-03" db="EMBL/GenBank/DDBJ databases">
        <authorList>
            <consortium name="NIH - Mammalian Gene Collection (MGC) project"/>
        </authorList>
    </citation>
    <scope>NUCLEOTIDE SEQUENCE [LARGE SCALE MRNA]</scope>
    <source>
        <strain>Hereford</strain>
        <tissue>Thymus</tissue>
    </source>
</reference>
<sequence length="557" mass="63420">MDQSRVLLWVKAEPFIVGALQIPPPSKFSLHYLRKISTYVRTRTIEGGYPRLSWSTWRHIACGKLQLAKDLAWLYFEMFDSLAMKTPEERLEWSEILSNCMSEDEVEKQRNQLSVDTLQFLLFLHIQQLNKVSLRTSLIGEEWPSPRHRAQSPDLTEKSSCHNKNWNDYSHQAFVCDHLSDLLELLLDPEQLTASFHSTHSSLVSREAVVALSFLIEGTVSGARKIYPLYELALWHPLHAETGFSKASKTFSFYKLEAWLRTCLTGNPFGTSACLKSGKKLAWAHQVEGTTKRAKIACNTHVAPRMHRMVVMSQVYKQTLAKSSDTLVGAHVKIHRCNESFIYLLSPLRSVTIEKCRNSTFVLGPVQTALHLHSCDNVKVIAVCHRLSISSTTGCIFHILTPTRPLILSGNQRVTFAPFHTHYPMLEDHMARTGLATVPNYWDNPMIVCRENSSPSVFRLLPPCEFYVFIIPFEMEGDTTEIPGGLPSAYQKALSQRKKKIQVWQKTVKEARLTKDQRKQFQVLVENKFYEWLINTGHRQQLDSLVPPAAGSKQAAG</sequence>
<accession>A4IF93</accession>
<keyword id="KW-0963">Cytoplasm</keyword>
<keyword id="KW-0206">Cytoskeleton</keyword>
<keyword id="KW-1185">Reference proteome</keyword>
<evidence type="ECO:0000250" key="1"/>
<evidence type="ECO:0000255" key="2">
    <source>
        <dbReference type="PROSITE-ProRule" id="PRU00659"/>
    </source>
</evidence>
<evidence type="ECO:0000305" key="3"/>
<feature type="chain" id="PRO_0000304943" description="TBCC domain-containing protein 1">
    <location>
        <begin position="1"/>
        <end position="557"/>
    </location>
</feature>
<feature type="domain" description="C-CAP/cofactor C-like" evidence="2">
    <location>
        <begin position="290"/>
        <end position="435"/>
    </location>
</feature>
<name>TBCC1_BOVIN</name>
<proteinExistence type="evidence at transcript level"/>